<proteinExistence type="inferred from homology"/>
<reference key="1">
    <citation type="submission" date="2009-06" db="EMBL/GenBank/DDBJ databases">
        <title>Complete sequence of Desulfovibrio salexigens DSM 2638.</title>
        <authorList>
            <consortium name="US DOE Joint Genome Institute"/>
            <person name="Lucas S."/>
            <person name="Copeland A."/>
            <person name="Lapidus A."/>
            <person name="Glavina del Rio T."/>
            <person name="Tice H."/>
            <person name="Bruce D."/>
            <person name="Goodwin L."/>
            <person name="Pitluck S."/>
            <person name="Munk A.C."/>
            <person name="Brettin T."/>
            <person name="Detter J.C."/>
            <person name="Han C."/>
            <person name="Tapia R."/>
            <person name="Larimer F."/>
            <person name="Land M."/>
            <person name="Hauser L."/>
            <person name="Kyrpides N."/>
            <person name="Anderson I."/>
            <person name="Wall J.D."/>
            <person name="Arkin A.P."/>
            <person name="Dehal P."/>
            <person name="Chivian D."/>
            <person name="Giles B."/>
            <person name="Hazen T.C."/>
        </authorList>
    </citation>
    <scope>NUCLEOTIDE SEQUENCE [LARGE SCALE GENOMIC DNA]</scope>
    <source>
        <strain>ATCC 14822 / DSM 2638 / NCIMB 8403 / VKM B-1763</strain>
    </source>
</reference>
<sequence>MIVFPAVDIKDGVCVRLSQGQADAVTVFSSDPVAQAKYWETQGARYLHVVDLDGAFSGMPKNFELIRDICSQLSIPVQLGGGIRDIETASKYLEAGVRRLIIGTMALEDEETFAELCAKFPGQIGVSLDAVNGQLKSRGWVEDAGITVFDIIPRIEAAGAAFIIYTDISRDGMQTGVNVMALSELCSKTKLPVIAAGGVATLEDVINLQPLVSKGLEGAVSGQAIYTGTLNFAEAMEWIENN</sequence>
<gene>
    <name evidence="1" type="primary">hisA</name>
    <name type="ordered locus">Desal_1557</name>
</gene>
<dbReference type="EC" id="5.3.1.16" evidence="1"/>
<dbReference type="EMBL" id="CP001649">
    <property type="protein sequence ID" value="ACS79619.1"/>
    <property type="molecule type" value="Genomic_DNA"/>
</dbReference>
<dbReference type="RefSeq" id="WP_015851437.1">
    <property type="nucleotide sequence ID" value="NC_012881.1"/>
</dbReference>
<dbReference type="SMR" id="C6BSE3"/>
<dbReference type="STRING" id="526222.Desal_1557"/>
<dbReference type="KEGG" id="dsa:Desal_1557"/>
<dbReference type="eggNOG" id="COG0106">
    <property type="taxonomic scope" value="Bacteria"/>
</dbReference>
<dbReference type="HOGENOM" id="CLU_048577_1_1_7"/>
<dbReference type="OrthoDB" id="9807749at2"/>
<dbReference type="UniPathway" id="UPA00031">
    <property type="reaction ID" value="UER00009"/>
</dbReference>
<dbReference type="Proteomes" id="UP000002601">
    <property type="component" value="Chromosome"/>
</dbReference>
<dbReference type="GO" id="GO:0005737">
    <property type="term" value="C:cytoplasm"/>
    <property type="evidence" value="ECO:0007669"/>
    <property type="project" value="UniProtKB-SubCell"/>
</dbReference>
<dbReference type="GO" id="GO:0003949">
    <property type="term" value="F:1-(5-phosphoribosyl)-5-[(5-phosphoribosylamino)methylideneamino]imidazole-4-carboxamide isomerase activity"/>
    <property type="evidence" value="ECO:0007669"/>
    <property type="project" value="UniProtKB-UniRule"/>
</dbReference>
<dbReference type="GO" id="GO:0000105">
    <property type="term" value="P:L-histidine biosynthetic process"/>
    <property type="evidence" value="ECO:0007669"/>
    <property type="project" value="UniProtKB-UniRule"/>
</dbReference>
<dbReference type="GO" id="GO:0000162">
    <property type="term" value="P:L-tryptophan biosynthetic process"/>
    <property type="evidence" value="ECO:0007669"/>
    <property type="project" value="TreeGrafter"/>
</dbReference>
<dbReference type="CDD" id="cd04732">
    <property type="entry name" value="HisA"/>
    <property type="match status" value="1"/>
</dbReference>
<dbReference type="FunFam" id="3.20.20.70:FF:000009">
    <property type="entry name" value="1-(5-phosphoribosyl)-5-[(5-phosphoribosylamino)methylideneamino] imidazole-4-carboxamide isomerase"/>
    <property type="match status" value="1"/>
</dbReference>
<dbReference type="Gene3D" id="3.20.20.70">
    <property type="entry name" value="Aldolase class I"/>
    <property type="match status" value="1"/>
</dbReference>
<dbReference type="HAMAP" id="MF_01014">
    <property type="entry name" value="HisA"/>
    <property type="match status" value="1"/>
</dbReference>
<dbReference type="InterPro" id="IPR013785">
    <property type="entry name" value="Aldolase_TIM"/>
</dbReference>
<dbReference type="InterPro" id="IPR006062">
    <property type="entry name" value="His_biosynth"/>
</dbReference>
<dbReference type="InterPro" id="IPR006063">
    <property type="entry name" value="HisA_bact_arch"/>
</dbReference>
<dbReference type="InterPro" id="IPR044524">
    <property type="entry name" value="Isoase_HisA-like"/>
</dbReference>
<dbReference type="InterPro" id="IPR023016">
    <property type="entry name" value="Isoase_HisA-like_bact"/>
</dbReference>
<dbReference type="InterPro" id="IPR011060">
    <property type="entry name" value="RibuloseP-bd_barrel"/>
</dbReference>
<dbReference type="NCBIfam" id="TIGR00007">
    <property type="entry name" value="1-(5-phosphoribosyl)-5-[(5-phosphoribosylamino)methylideneamino]imidazole-4-carboxamide isomerase"/>
    <property type="match status" value="1"/>
</dbReference>
<dbReference type="PANTHER" id="PTHR43090">
    <property type="entry name" value="1-(5-PHOSPHORIBOSYL)-5-[(5-PHOSPHORIBOSYLAMINO)METHYLIDENEAMINO] IMIDAZOLE-4-CARBOXAMIDE ISOMERASE"/>
    <property type="match status" value="1"/>
</dbReference>
<dbReference type="PANTHER" id="PTHR43090:SF2">
    <property type="entry name" value="1-(5-PHOSPHORIBOSYL)-5-[(5-PHOSPHORIBOSYLAMINO)METHYLIDENEAMINO] IMIDAZOLE-4-CARBOXAMIDE ISOMERASE"/>
    <property type="match status" value="1"/>
</dbReference>
<dbReference type="Pfam" id="PF00977">
    <property type="entry name" value="His_biosynth"/>
    <property type="match status" value="1"/>
</dbReference>
<dbReference type="SUPFAM" id="SSF51366">
    <property type="entry name" value="Ribulose-phoshate binding barrel"/>
    <property type="match status" value="1"/>
</dbReference>
<comment type="catalytic activity">
    <reaction evidence="1">
        <text>1-(5-phospho-beta-D-ribosyl)-5-[(5-phospho-beta-D-ribosylamino)methylideneamino]imidazole-4-carboxamide = 5-[(5-phospho-1-deoxy-D-ribulos-1-ylimino)methylamino]-1-(5-phospho-beta-D-ribosyl)imidazole-4-carboxamide</text>
        <dbReference type="Rhea" id="RHEA:15469"/>
        <dbReference type="ChEBI" id="CHEBI:58435"/>
        <dbReference type="ChEBI" id="CHEBI:58525"/>
        <dbReference type="EC" id="5.3.1.16"/>
    </reaction>
</comment>
<comment type="pathway">
    <text evidence="1">Amino-acid biosynthesis; L-histidine biosynthesis; L-histidine from 5-phospho-alpha-D-ribose 1-diphosphate: step 4/9.</text>
</comment>
<comment type="subcellular location">
    <subcellularLocation>
        <location evidence="1">Cytoplasm</location>
    </subcellularLocation>
</comment>
<comment type="similarity">
    <text evidence="1">Belongs to the HisA/HisF family.</text>
</comment>
<keyword id="KW-0028">Amino-acid biosynthesis</keyword>
<keyword id="KW-0963">Cytoplasm</keyword>
<keyword id="KW-0368">Histidine biosynthesis</keyword>
<keyword id="KW-0413">Isomerase</keyword>
<keyword id="KW-1185">Reference proteome</keyword>
<name>HIS4_MARSD</name>
<accession>C6BSE3</accession>
<organism>
    <name type="scientific">Maridesulfovibrio salexigens (strain ATCC 14822 / DSM 2638 / NCIMB 8403 / VKM B-1763)</name>
    <name type="common">Desulfovibrio salexigens</name>
    <dbReference type="NCBI Taxonomy" id="526222"/>
    <lineage>
        <taxon>Bacteria</taxon>
        <taxon>Pseudomonadati</taxon>
        <taxon>Thermodesulfobacteriota</taxon>
        <taxon>Desulfovibrionia</taxon>
        <taxon>Desulfovibrionales</taxon>
        <taxon>Desulfovibrionaceae</taxon>
        <taxon>Maridesulfovibrio</taxon>
    </lineage>
</organism>
<feature type="chain" id="PRO_1000213224" description="1-(5-phosphoribosyl)-5-[(5-phosphoribosylamino)methylideneamino] imidazole-4-carboxamide isomerase">
    <location>
        <begin position="1"/>
        <end position="242"/>
    </location>
</feature>
<feature type="active site" description="Proton acceptor" evidence="1">
    <location>
        <position position="8"/>
    </location>
</feature>
<feature type="active site" description="Proton donor" evidence="1">
    <location>
        <position position="129"/>
    </location>
</feature>
<evidence type="ECO:0000255" key="1">
    <source>
        <dbReference type="HAMAP-Rule" id="MF_01014"/>
    </source>
</evidence>
<protein>
    <recommendedName>
        <fullName evidence="1">1-(5-phosphoribosyl)-5-[(5-phosphoribosylamino)methylideneamino] imidazole-4-carboxamide isomerase</fullName>
        <ecNumber evidence="1">5.3.1.16</ecNumber>
    </recommendedName>
    <alternativeName>
        <fullName evidence="1">Phosphoribosylformimino-5-aminoimidazole carboxamide ribotide isomerase</fullName>
    </alternativeName>
</protein>